<protein>
    <recommendedName>
        <fullName evidence="2">Formamidopyrimidine-DNA glycosylase</fullName>
        <shortName evidence="2">Fapy-DNA glycosylase</shortName>
        <ecNumber evidence="2">3.2.2.23</ecNumber>
    </recommendedName>
    <alternativeName>
        <fullName evidence="2">DNA-(apurinic or apyrimidinic site) lyase MutM</fullName>
        <shortName evidence="2">AP lyase MutM</shortName>
        <ecNumber evidence="2">4.2.99.18</ecNumber>
    </alternativeName>
</protein>
<accession>Q0SYG3</accession>
<name>FPG_SHIF8</name>
<keyword id="KW-0227">DNA damage</keyword>
<keyword id="KW-0234">DNA repair</keyword>
<keyword id="KW-0238">DNA-binding</keyword>
<keyword id="KW-0326">Glycosidase</keyword>
<keyword id="KW-0378">Hydrolase</keyword>
<keyword id="KW-0456">Lyase</keyword>
<keyword id="KW-0479">Metal-binding</keyword>
<keyword id="KW-0511">Multifunctional enzyme</keyword>
<keyword id="KW-0862">Zinc</keyword>
<keyword id="KW-0863">Zinc-finger</keyword>
<feature type="initiator methionine" description="Removed" evidence="1">
    <location>
        <position position="1"/>
    </location>
</feature>
<feature type="chain" id="PRO_1000008778" description="Formamidopyrimidine-DNA glycosylase">
    <location>
        <begin position="2"/>
        <end position="269"/>
    </location>
</feature>
<feature type="zinc finger region" description="FPG-type" evidence="2">
    <location>
        <begin position="235"/>
        <end position="269"/>
    </location>
</feature>
<feature type="active site" description="Schiff-base intermediate with DNA" evidence="2">
    <location>
        <position position="2"/>
    </location>
</feature>
<feature type="active site" description="Proton donor" evidence="2">
    <location>
        <position position="3"/>
    </location>
</feature>
<feature type="active site" description="Proton donor; for beta-elimination activity" evidence="2">
    <location>
        <position position="57"/>
    </location>
</feature>
<feature type="active site" description="Proton donor; for delta-elimination activity" evidence="2">
    <location>
        <position position="259"/>
    </location>
</feature>
<feature type="binding site" evidence="2">
    <location>
        <position position="90"/>
    </location>
    <ligand>
        <name>DNA</name>
        <dbReference type="ChEBI" id="CHEBI:16991"/>
    </ligand>
</feature>
<feature type="binding site" evidence="2">
    <location>
        <position position="109"/>
    </location>
    <ligand>
        <name>DNA</name>
        <dbReference type="ChEBI" id="CHEBI:16991"/>
    </ligand>
</feature>
<feature type="binding site" evidence="2">
    <location>
        <position position="150"/>
    </location>
    <ligand>
        <name>DNA</name>
        <dbReference type="ChEBI" id="CHEBI:16991"/>
    </ligand>
</feature>
<sequence>MPELPEVETSRRGIEPHLVGATILHAVVRNGRLRWPVSEEIYRLSDQPVLSVQRRAKYLLLELPEGWIIIHLGMSGSLRILPEELPPEKHDHVDLVMSNGKVLRYTDPRRFGAWLWTKELEGHNVLAHLGPEPLSDDFNGEYLHQKCAKKKTAIKPWLMDNKLVVGVGNIYASESLFAAGIHPDRLASSLSLAECELLARVIKAVLLRSIEQGGTTLKDFLQSDGKPGYFAQELQVYGRKGEPCRVCGTPIVATKHAQRATFYCRQCQK</sequence>
<proteinExistence type="inferred from homology"/>
<reference key="1">
    <citation type="journal article" date="2006" name="BMC Genomics">
        <title>Complete genome sequence of Shigella flexneri 5b and comparison with Shigella flexneri 2a.</title>
        <authorList>
            <person name="Nie H."/>
            <person name="Yang F."/>
            <person name="Zhang X."/>
            <person name="Yang J."/>
            <person name="Chen L."/>
            <person name="Wang J."/>
            <person name="Xiong Z."/>
            <person name="Peng J."/>
            <person name="Sun L."/>
            <person name="Dong J."/>
            <person name="Xue Y."/>
            <person name="Xu X."/>
            <person name="Chen S."/>
            <person name="Yao Z."/>
            <person name="Shen Y."/>
            <person name="Jin Q."/>
        </authorList>
    </citation>
    <scope>NUCLEOTIDE SEQUENCE [LARGE SCALE GENOMIC DNA]</scope>
    <source>
        <strain>8401</strain>
    </source>
</reference>
<evidence type="ECO:0000250" key="1"/>
<evidence type="ECO:0000255" key="2">
    <source>
        <dbReference type="HAMAP-Rule" id="MF_00103"/>
    </source>
</evidence>
<comment type="function">
    <text evidence="2">Involved in base excision repair of DNA damaged by oxidation or by mutagenic agents. Acts as a DNA glycosylase that recognizes and removes damaged bases. Has a preference for oxidized purines, such as 7,8-dihydro-8-oxoguanine (8-oxoG). Has AP (apurinic/apyrimidinic) lyase activity and introduces nicks in the DNA strand. Cleaves the DNA backbone by beta-delta elimination to generate a single-strand break at the site of the removed base with both 3'- and 5'-phosphates.</text>
</comment>
<comment type="catalytic activity">
    <reaction evidence="2">
        <text>Hydrolysis of DNA containing ring-opened 7-methylguanine residues, releasing 2,6-diamino-4-hydroxy-5-(N-methyl)formamidopyrimidine.</text>
        <dbReference type="EC" id="3.2.2.23"/>
    </reaction>
</comment>
<comment type="catalytic activity">
    <reaction evidence="2">
        <text>2'-deoxyribonucleotide-(2'-deoxyribose 5'-phosphate)-2'-deoxyribonucleotide-DNA = a 3'-end 2'-deoxyribonucleotide-(2,3-dehydro-2,3-deoxyribose 5'-phosphate)-DNA + a 5'-end 5'-phospho-2'-deoxyribonucleoside-DNA + H(+)</text>
        <dbReference type="Rhea" id="RHEA:66592"/>
        <dbReference type="Rhea" id="RHEA-COMP:13180"/>
        <dbReference type="Rhea" id="RHEA-COMP:16897"/>
        <dbReference type="Rhea" id="RHEA-COMP:17067"/>
        <dbReference type="ChEBI" id="CHEBI:15378"/>
        <dbReference type="ChEBI" id="CHEBI:136412"/>
        <dbReference type="ChEBI" id="CHEBI:157695"/>
        <dbReference type="ChEBI" id="CHEBI:167181"/>
        <dbReference type="EC" id="4.2.99.18"/>
    </reaction>
</comment>
<comment type="cofactor">
    <cofactor evidence="2">
        <name>Zn(2+)</name>
        <dbReference type="ChEBI" id="CHEBI:29105"/>
    </cofactor>
    <text evidence="2">Binds 1 zinc ion per subunit.</text>
</comment>
<comment type="subunit">
    <text evidence="2">Monomer.</text>
</comment>
<comment type="similarity">
    <text evidence="2">Belongs to the FPG family.</text>
</comment>
<organism>
    <name type="scientific">Shigella flexneri serotype 5b (strain 8401)</name>
    <dbReference type="NCBI Taxonomy" id="373384"/>
    <lineage>
        <taxon>Bacteria</taxon>
        <taxon>Pseudomonadati</taxon>
        <taxon>Pseudomonadota</taxon>
        <taxon>Gammaproteobacteria</taxon>
        <taxon>Enterobacterales</taxon>
        <taxon>Enterobacteriaceae</taxon>
        <taxon>Shigella</taxon>
    </lineage>
</organism>
<gene>
    <name evidence="2" type="primary">mutM</name>
    <name evidence="2" type="synonym">fpg</name>
    <name type="ordered locus">SFV_3894</name>
</gene>
<dbReference type="EC" id="3.2.2.23" evidence="2"/>
<dbReference type="EC" id="4.2.99.18" evidence="2"/>
<dbReference type="EMBL" id="CP000266">
    <property type="protein sequence ID" value="ABF05902.1"/>
    <property type="molecule type" value="Genomic_DNA"/>
</dbReference>
<dbReference type="RefSeq" id="WP_001114533.1">
    <property type="nucleotide sequence ID" value="NC_008258.1"/>
</dbReference>
<dbReference type="SMR" id="Q0SYG3"/>
<dbReference type="GeneID" id="93778348"/>
<dbReference type="KEGG" id="sfv:SFV_3894"/>
<dbReference type="HOGENOM" id="CLU_038423_1_1_6"/>
<dbReference type="Proteomes" id="UP000000659">
    <property type="component" value="Chromosome"/>
</dbReference>
<dbReference type="GO" id="GO:0034039">
    <property type="term" value="F:8-oxo-7,8-dihydroguanine DNA N-glycosylase activity"/>
    <property type="evidence" value="ECO:0007669"/>
    <property type="project" value="TreeGrafter"/>
</dbReference>
<dbReference type="GO" id="GO:0140078">
    <property type="term" value="F:class I DNA-(apurinic or apyrimidinic site) endonuclease activity"/>
    <property type="evidence" value="ECO:0007669"/>
    <property type="project" value="UniProtKB-EC"/>
</dbReference>
<dbReference type="GO" id="GO:0003684">
    <property type="term" value="F:damaged DNA binding"/>
    <property type="evidence" value="ECO:0007669"/>
    <property type="project" value="InterPro"/>
</dbReference>
<dbReference type="GO" id="GO:0008270">
    <property type="term" value="F:zinc ion binding"/>
    <property type="evidence" value="ECO:0007669"/>
    <property type="project" value="UniProtKB-UniRule"/>
</dbReference>
<dbReference type="GO" id="GO:0006284">
    <property type="term" value="P:base-excision repair"/>
    <property type="evidence" value="ECO:0007669"/>
    <property type="project" value="InterPro"/>
</dbReference>
<dbReference type="CDD" id="cd08966">
    <property type="entry name" value="EcFpg-like_N"/>
    <property type="match status" value="1"/>
</dbReference>
<dbReference type="FunFam" id="1.10.8.50:FF:000003">
    <property type="entry name" value="Formamidopyrimidine-DNA glycosylase"/>
    <property type="match status" value="1"/>
</dbReference>
<dbReference type="FunFam" id="3.20.190.10:FF:000001">
    <property type="entry name" value="Formamidopyrimidine-DNA glycosylase"/>
    <property type="match status" value="1"/>
</dbReference>
<dbReference type="Gene3D" id="1.10.8.50">
    <property type="match status" value="1"/>
</dbReference>
<dbReference type="Gene3D" id="3.20.190.10">
    <property type="entry name" value="MutM-like, N-terminal"/>
    <property type="match status" value="1"/>
</dbReference>
<dbReference type="HAMAP" id="MF_00103">
    <property type="entry name" value="Fapy_DNA_glycosyl"/>
    <property type="match status" value="1"/>
</dbReference>
<dbReference type="InterPro" id="IPR015886">
    <property type="entry name" value="DNA_glyclase/AP_lyase_DNA-bd"/>
</dbReference>
<dbReference type="InterPro" id="IPR015887">
    <property type="entry name" value="DNA_glyclase_Znf_dom_DNA_BS"/>
</dbReference>
<dbReference type="InterPro" id="IPR020629">
    <property type="entry name" value="Formamido-pyr_DNA_Glyclase"/>
</dbReference>
<dbReference type="InterPro" id="IPR012319">
    <property type="entry name" value="FPG_cat"/>
</dbReference>
<dbReference type="InterPro" id="IPR035937">
    <property type="entry name" value="MutM-like_N-ter"/>
</dbReference>
<dbReference type="InterPro" id="IPR010979">
    <property type="entry name" value="Ribosomal_uS13-like_H2TH"/>
</dbReference>
<dbReference type="InterPro" id="IPR000214">
    <property type="entry name" value="Znf_DNA_glyclase/AP_lyase"/>
</dbReference>
<dbReference type="InterPro" id="IPR010663">
    <property type="entry name" value="Znf_FPG/IleRS"/>
</dbReference>
<dbReference type="NCBIfam" id="TIGR00577">
    <property type="entry name" value="fpg"/>
    <property type="match status" value="1"/>
</dbReference>
<dbReference type="NCBIfam" id="NF002211">
    <property type="entry name" value="PRK01103.1"/>
    <property type="match status" value="1"/>
</dbReference>
<dbReference type="PANTHER" id="PTHR22993">
    <property type="entry name" value="FORMAMIDOPYRIMIDINE-DNA GLYCOSYLASE"/>
    <property type="match status" value="1"/>
</dbReference>
<dbReference type="PANTHER" id="PTHR22993:SF9">
    <property type="entry name" value="FORMAMIDOPYRIMIDINE-DNA GLYCOSYLASE"/>
    <property type="match status" value="1"/>
</dbReference>
<dbReference type="Pfam" id="PF01149">
    <property type="entry name" value="Fapy_DNA_glyco"/>
    <property type="match status" value="1"/>
</dbReference>
<dbReference type="Pfam" id="PF06831">
    <property type="entry name" value="H2TH"/>
    <property type="match status" value="1"/>
</dbReference>
<dbReference type="Pfam" id="PF06827">
    <property type="entry name" value="zf-FPG_IleRS"/>
    <property type="match status" value="1"/>
</dbReference>
<dbReference type="SMART" id="SM00898">
    <property type="entry name" value="Fapy_DNA_glyco"/>
    <property type="match status" value="1"/>
</dbReference>
<dbReference type="SMART" id="SM01232">
    <property type="entry name" value="H2TH"/>
    <property type="match status" value="1"/>
</dbReference>
<dbReference type="SUPFAM" id="SSF57716">
    <property type="entry name" value="Glucocorticoid receptor-like (DNA-binding domain)"/>
    <property type="match status" value="1"/>
</dbReference>
<dbReference type="SUPFAM" id="SSF81624">
    <property type="entry name" value="N-terminal domain of MutM-like DNA repair proteins"/>
    <property type="match status" value="1"/>
</dbReference>
<dbReference type="SUPFAM" id="SSF46946">
    <property type="entry name" value="S13-like H2TH domain"/>
    <property type="match status" value="1"/>
</dbReference>
<dbReference type="PROSITE" id="PS51068">
    <property type="entry name" value="FPG_CAT"/>
    <property type="match status" value="1"/>
</dbReference>
<dbReference type="PROSITE" id="PS01242">
    <property type="entry name" value="ZF_FPG_1"/>
    <property type="match status" value="1"/>
</dbReference>
<dbReference type="PROSITE" id="PS51066">
    <property type="entry name" value="ZF_FPG_2"/>
    <property type="match status" value="1"/>
</dbReference>